<comment type="function">
    <text evidence="1">Catalyzes the reversible interconversion of serine and glycine with tetrahydrofolate (THF) serving as the one-carbon carrier. This reaction serves as the major source of one-carbon groups required for the biosynthesis of purines, thymidylate, methionine, and other important biomolecules. Also exhibits THF-independent aldolase activity toward beta-hydroxyamino acids, producing glycine and aldehydes, via a retro-aldol mechanism.</text>
</comment>
<comment type="catalytic activity">
    <reaction evidence="1">
        <text>(6R)-5,10-methylene-5,6,7,8-tetrahydrofolate + glycine + H2O = (6S)-5,6,7,8-tetrahydrofolate + L-serine</text>
        <dbReference type="Rhea" id="RHEA:15481"/>
        <dbReference type="ChEBI" id="CHEBI:15377"/>
        <dbReference type="ChEBI" id="CHEBI:15636"/>
        <dbReference type="ChEBI" id="CHEBI:33384"/>
        <dbReference type="ChEBI" id="CHEBI:57305"/>
        <dbReference type="ChEBI" id="CHEBI:57453"/>
        <dbReference type="EC" id="2.1.2.1"/>
    </reaction>
</comment>
<comment type="cofactor">
    <cofactor evidence="1">
        <name>pyridoxal 5'-phosphate</name>
        <dbReference type="ChEBI" id="CHEBI:597326"/>
    </cofactor>
</comment>
<comment type="pathway">
    <text evidence="1">One-carbon metabolism; tetrahydrofolate interconversion.</text>
</comment>
<comment type="pathway">
    <text evidence="1">Amino-acid biosynthesis; glycine biosynthesis; glycine from L-serine: step 1/1.</text>
</comment>
<comment type="subunit">
    <text evidence="1">Homodimer.</text>
</comment>
<comment type="subcellular location">
    <subcellularLocation>
        <location evidence="1">Cytoplasm</location>
    </subcellularLocation>
</comment>
<comment type="similarity">
    <text evidence="1">Belongs to the SHMT family.</text>
</comment>
<feature type="chain" id="PRO_1000006303" description="Serine hydroxymethyltransferase">
    <location>
        <begin position="1"/>
        <end position="432"/>
    </location>
</feature>
<feature type="binding site" evidence="1">
    <location>
        <position position="127"/>
    </location>
    <ligand>
        <name>(6S)-5,6,7,8-tetrahydrofolate</name>
        <dbReference type="ChEBI" id="CHEBI:57453"/>
    </ligand>
</feature>
<feature type="binding site" evidence="1">
    <location>
        <begin position="131"/>
        <end position="133"/>
    </location>
    <ligand>
        <name>(6S)-5,6,7,8-tetrahydrofolate</name>
        <dbReference type="ChEBI" id="CHEBI:57453"/>
    </ligand>
</feature>
<feature type="site" description="Plays an important role in substrate specificity" evidence="1">
    <location>
        <position position="235"/>
    </location>
</feature>
<feature type="modified residue" description="N6-(pyridoxal phosphate)lysine" evidence="1">
    <location>
        <position position="236"/>
    </location>
</feature>
<accession>Q2KA25</accession>
<proteinExistence type="inferred from homology"/>
<dbReference type="EC" id="2.1.2.1" evidence="1"/>
<dbReference type="EMBL" id="CP000133">
    <property type="protein sequence ID" value="ABC90311.1"/>
    <property type="molecule type" value="Genomic_DNA"/>
</dbReference>
<dbReference type="RefSeq" id="WP_011424840.1">
    <property type="nucleotide sequence ID" value="NC_007761.1"/>
</dbReference>
<dbReference type="SMR" id="Q2KA25"/>
<dbReference type="KEGG" id="ret:RHE_CH01508"/>
<dbReference type="eggNOG" id="COG0112">
    <property type="taxonomic scope" value="Bacteria"/>
</dbReference>
<dbReference type="HOGENOM" id="CLU_022477_2_1_5"/>
<dbReference type="OrthoDB" id="9803846at2"/>
<dbReference type="UniPathway" id="UPA00193"/>
<dbReference type="UniPathway" id="UPA00288">
    <property type="reaction ID" value="UER01023"/>
</dbReference>
<dbReference type="Proteomes" id="UP000001936">
    <property type="component" value="Chromosome"/>
</dbReference>
<dbReference type="GO" id="GO:0005829">
    <property type="term" value="C:cytosol"/>
    <property type="evidence" value="ECO:0007669"/>
    <property type="project" value="TreeGrafter"/>
</dbReference>
<dbReference type="GO" id="GO:0004372">
    <property type="term" value="F:glycine hydroxymethyltransferase activity"/>
    <property type="evidence" value="ECO:0007669"/>
    <property type="project" value="UniProtKB-UniRule"/>
</dbReference>
<dbReference type="GO" id="GO:0030170">
    <property type="term" value="F:pyridoxal phosphate binding"/>
    <property type="evidence" value="ECO:0007669"/>
    <property type="project" value="UniProtKB-UniRule"/>
</dbReference>
<dbReference type="GO" id="GO:0019264">
    <property type="term" value="P:glycine biosynthetic process from serine"/>
    <property type="evidence" value="ECO:0007669"/>
    <property type="project" value="UniProtKB-UniRule"/>
</dbReference>
<dbReference type="GO" id="GO:0035999">
    <property type="term" value="P:tetrahydrofolate interconversion"/>
    <property type="evidence" value="ECO:0007669"/>
    <property type="project" value="UniProtKB-UniRule"/>
</dbReference>
<dbReference type="CDD" id="cd00378">
    <property type="entry name" value="SHMT"/>
    <property type="match status" value="1"/>
</dbReference>
<dbReference type="FunFam" id="3.40.640.10:FF:000001">
    <property type="entry name" value="Serine hydroxymethyltransferase"/>
    <property type="match status" value="1"/>
</dbReference>
<dbReference type="FunFam" id="3.90.1150.10:FF:000003">
    <property type="entry name" value="Serine hydroxymethyltransferase"/>
    <property type="match status" value="1"/>
</dbReference>
<dbReference type="Gene3D" id="3.90.1150.10">
    <property type="entry name" value="Aspartate Aminotransferase, domain 1"/>
    <property type="match status" value="1"/>
</dbReference>
<dbReference type="Gene3D" id="3.40.640.10">
    <property type="entry name" value="Type I PLP-dependent aspartate aminotransferase-like (Major domain)"/>
    <property type="match status" value="1"/>
</dbReference>
<dbReference type="HAMAP" id="MF_00051">
    <property type="entry name" value="SHMT"/>
    <property type="match status" value="1"/>
</dbReference>
<dbReference type="InterPro" id="IPR015424">
    <property type="entry name" value="PyrdxlP-dep_Trfase"/>
</dbReference>
<dbReference type="InterPro" id="IPR015421">
    <property type="entry name" value="PyrdxlP-dep_Trfase_major"/>
</dbReference>
<dbReference type="InterPro" id="IPR015422">
    <property type="entry name" value="PyrdxlP-dep_Trfase_small"/>
</dbReference>
<dbReference type="InterPro" id="IPR001085">
    <property type="entry name" value="Ser_HO-MeTrfase"/>
</dbReference>
<dbReference type="InterPro" id="IPR049943">
    <property type="entry name" value="Ser_HO-MeTrfase-like"/>
</dbReference>
<dbReference type="InterPro" id="IPR019798">
    <property type="entry name" value="Ser_HO-MeTrfase_PLP_BS"/>
</dbReference>
<dbReference type="InterPro" id="IPR039429">
    <property type="entry name" value="SHMT-like_dom"/>
</dbReference>
<dbReference type="NCBIfam" id="NF000586">
    <property type="entry name" value="PRK00011.1"/>
    <property type="match status" value="1"/>
</dbReference>
<dbReference type="PANTHER" id="PTHR11680">
    <property type="entry name" value="SERINE HYDROXYMETHYLTRANSFERASE"/>
    <property type="match status" value="1"/>
</dbReference>
<dbReference type="PANTHER" id="PTHR11680:SF35">
    <property type="entry name" value="SERINE HYDROXYMETHYLTRANSFERASE 1"/>
    <property type="match status" value="1"/>
</dbReference>
<dbReference type="Pfam" id="PF00464">
    <property type="entry name" value="SHMT"/>
    <property type="match status" value="1"/>
</dbReference>
<dbReference type="PIRSF" id="PIRSF000412">
    <property type="entry name" value="SHMT"/>
    <property type="match status" value="1"/>
</dbReference>
<dbReference type="SUPFAM" id="SSF53383">
    <property type="entry name" value="PLP-dependent transferases"/>
    <property type="match status" value="1"/>
</dbReference>
<dbReference type="PROSITE" id="PS00096">
    <property type="entry name" value="SHMT"/>
    <property type="match status" value="1"/>
</dbReference>
<protein>
    <recommendedName>
        <fullName evidence="1">Serine hydroxymethyltransferase</fullName>
        <shortName evidence="1">SHMT</shortName>
        <shortName evidence="1">Serine methylase</shortName>
        <ecNumber evidence="1">2.1.2.1</ecNumber>
    </recommendedName>
</protein>
<reference key="1">
    <citation type="journal article" date="2006" name="Proc. Natl. Acad. Sci. U.S.A.">
        <title>The partitioned Rhizobium etli genome: genetic and metabolic redundancy in seven interacting replicons.</title>
        <authorList>
            <person name="Gonzalez V."/>
            <person name="Santamaria R.I."/>
            <person name="Bustos P."/>
            <person name="Hernandez-Gonzalez I."/>
            <person name="Medrano-Soto A."/>
            <person name="Moreno-Hagelsieb G."/>
            <person name="Janga S.C."/>
            <person name="Ramirez M.A."/>
            <person name="Jimenez-Jacinto V."/>
            <person name="Collado-Vides J."/>
            <person name="Davila G."/>
        </authorList>
    </citation>
    <scope>NUCLEOTIDE SEQUENCE [LARGE SCALE GENOMIC DNA]</scope>
    <source>
        <strain>ATCC 51251 / DSM 11541 / JCM 21823 / NBRC 15573 / CFN 42</strain>
    </source>
</reference>
<gene>
    <name evidence="1" type="primary">glyA</name>
    <name type="ordered locus">RHE_CH01508</name>
</gene>
<organism>
    <name type="scientific">Rhizobium etli (strain ATCC 51251 / DSM 11541 / JCM 21823 / NBRC 15573 / CFN 42)</name>
    <dbReference type="NCBI Taxonomy" id="347834"/>
    <lineage>
        <taxon>Bacteria</taxon>
        <taxon>Pseudomonadati</taxon>
        <taxon>Pseudomonadota</taxon>
        <taxon>Alphaproteobacteria</taxon>
        <taxon>Hyphomicrobiales</taxon>
        <taxon>Rhizobiaceae</taxon>
        <taxon>Rhizobium/Agrobacterium group</taxon>
        <taxon>Rhizobium</taxon>
    </lineage>
</organism>
<sequence length="432" mass="46598">MTNASTESFFNRSLADVDPEIFGAIGKELGRQRHEIELIASENIVSRAVLEAQGSIMTNKYAEGYPGKRYYGGCQFVDIAEELAIERAKKLFGVNFANVQPNSGSQMNQAVFLALLQPGDTFMGLDLNSGGHLTHGSPVNMSGKWFNVVSYGVREGDNLLDMDEVARKAEEHKPKVIIAGGTAYSRIWDWKRFREIADSVGAYLMVDMAHIAGLVAGGQHPSPFPHCHVATTTTHKSLRGPRGGVILTNEEDLAKKFNSAVFPGLQGGPLMHIIAAKAVAFGEALQPEFKEYAAQIVKNARALAETLIAGGLDVVSGGTDNHLMLVDLRKKNATGKRAEAALGRAYITCNKNGIPFDPEKPFVTSGVRLGAPAGTTRGFKEAEFREIGNLIVEVLDGLKVANSDDGNAAVEAAVRGKVVNLTDRFPMYDYMG</sequence>
<evidence type="ECO:0000255" key="1">
    <source>
        <dbReference type="HAMAP-Rule" id="MF_00051"/>
    </source>
</evidence>
<keyword id="KW-0028">Amino-acid biosynthesis</keyword>
<keyword id="KW-0963">Cytoplasm</keyword>
<keyword id="KW-0554">One-carbon metabolism</keyword>
<keyword id="KW-0663">Pyridoxal phosphate</keyword>
<keyword id="KW-1185">Reference proteome</keyword>
<keyword id="KW-0808">Transferase</keyword>
<name>GLYA_RHIEC</name>